<protein>
    <recommendedName>
        <fullName evidence="1">Ribonuclease T</fullName>
        <ecNumber evidence="1">3.1.13.-</ecNumber>
    </recommendedName>
    <alternativeName>
        <fullName evidence="1">Exoribonuclease T</fullName>
        <shortName evidence="1">RNase T</shortName>
    </alternativeName>
</protein>
<proteinExistence type="inferred from homology"/>
<keyword id="KW-0269">Exonuclease</keyword>
<keyword id="KW-0378">Hydrolase</keyword>
<keyword id="KW-0460">Magnesium</keyword>
<keyword id="KW-0479">Metal-binding</keyword>
<keyword id="KW-0540">Nuclease</keyword>
<keyword id="KW-0819">tRNA processing</keyword>
<evidence type="ECO:0000255" key="1">
    <source>
        <dbReference type="HAMAP-Rule" id="MF_00157"/>
    </source>
</evidence>
<gene>
    <name evidence="1" type="primary">rnt</name>
    <name type="ordered locus">PSPA7_1619</name>
</gene>
<organism>
    <name type="scientific">Pseudomonas paraeruginosa (strain DSM 24068 / PA7)</name>
    <name type="common">Pseudomonas aeruginosa (strain PA7)</name>
    <dbReference type="NCBI Taxonomy" id="381754"/>
    <lineage>
        <taxon>Bacteria</taxon>
        <taxon>Pseudomonadati</taxon>
        <taxon>Pseudomonadota</taxon>
        <taxon>Gammaproteobacteria</taxon>
        <taxon>Pseudomonadales</taxon>
        <taxon>Pseudomonadaceae</taxon>
        <taxon>Pseudomonas</taxon>
        <taxon>Pseudomonas paraeruginosa</taxon>
    </lineage>
</organism>
<dbReference type="EC" id="3.1.13.-" evidence="1"/>
<dbReference type="EMBL" id="CP000744">
    <property type="protein sequence ID" value="ABR85976.1"/>
    <property type="molecule type" value="Genomic_DNA"/>
</dbReference>
<dbReference type="RefSeq" id="WP_003155625.1">
    <property type="nucleotide sequence ID" value="NC_009656.1"/>
</dbReference>
<dbReference type="SMR" id="A6V1R8"/>
<dbReference type="GeneID" id="77219985"/>
<dbReference type="KEGG" id="pap:PSPA7_1619"/>
<dbReference type="HOGENOM" id="CLU_082724_0_0_6"/>
<dbReference type="Proteomes" id="UP000001582">
    <property type="component" value="Chromosome"/>
</dbReference>
<dbReference type="GO" id="GO:0005829">
    <property type="term" value="C:cytosol"/>
    <property type="evidence" value="ECO:0007669"/>
    <property type="project" value="TreeGrafter"/>
</dbReference>
<dbReference type="GO" id="GO:0008408">
    <property type="term" value="F:3'-5' exonuclease activity"/>
    <property type="evidence" value="ECO:0007669"/>
    <property type="project" value="TreeGrafter"/>
</dbReference>
<dbReference type="GO" id="GO:0000287">
    <property type="term" value="F:magnesium ion binding"/>
    <property type="evidence" value="ECO:0007669"/>
    <property type="project" value="UniProtKB-UniRule"/>
</dbReference>
<dbReference type="GO" id="GO:0003676">
    <property type="term" value="F:nucleic acid binding"/>
    <property type="evidence" value="ECO:0007669"/>
    <property type="project" value="InterPro"/>
</dbReference>
<dbReference type="GO" id="GO:0016896">
    <property type="term" value="F:RNA exonuclease activity, producing 5'-phosphomonoesters"/>
    <property type="evidence" value="ECO:0007669"/>
    <property type="project" value="UniProtKB-UniRule"/>
</dbReference>
<dbReference type="GO" id="GO:0045004">
    <property type="term" value="P:DNA replication proofreading"/>
    <property type="evidence" value="ECO:0007669"/>
    <property type="project" value="TreeGrafter"/>
</dbReference>
<dbReference type="GO" id="GO:0008033">
    <property type="term" value="P:tRNA processing"/>
    <property type="evidence" value="ECO:0007669"/>
    <property type="project" value="UniProtKB-KW"/>
</dbReference>
<dbReference type="CDD" id="cd06134">
    <property type="entry name" value="RNaseT"/>
    <property type="match status" value="1"/>
</dbReference>
<dbReference type="FunFam" id="3.30.420.10:FF:000009">
    <property type="entry name" value="Ribonuclease T"/>
    <property type="match status" value="1"/>
</dbReference>
<dbReference type="Gene3D" id="3.30.420.10">
    <property type="entry name" value="Ribonuclease H-like superfamily/Ribonuclease H"/>
    <property type="match status" value="1"/>
</dbReference>
<dbReference type="HAMAP" id="MF_00157">
    <property type="entry name" value="RNase_T"/>
    <property type="match status" value="1"/>
</dbReference>
<dbReference type="InterPro" id="IPR013520">
    <property type="entry name" value="Exonuclease_RNaseT/DNA_pol3"/>
</dbReference>
<dbReference type="InterPro" id="IPR005987">
    <property type="entry name" value="RNase_T"/>
</dbReference>
<dbReference type="InterPro" id="IPR012337">
    <property type="entry name" value="RNaseH-like_sf"/>
</dbReference>
<dbReference type="InterPro" id="IPR036397">
    <property type="entry name" value="RNaseH_sf"/>
</dbReference>
<dbReference type="NCBIfam" id="TIGR01298">
    <property type="entry name" value="RNaseT"/>
    <property type="match status" value="1"/>
</dbReference>
<dbReference type="PANTHER" id="PTHR30231">
    <property type="entry name" value="DNA POLYMERASE III SUBUNIT EPSILON"/>
    <property type="match status" value="1"/>
</dbReference>
<dbReference type="PANTHER" id="PTHR30231:SF2">
    <property type="entry name" value="RIBONUCLEASE T"/>
    <property type="match status" value="1"/>
</dbReference>
<dbReference type="Pfam" id="PF00929">
    <property type="entry name" value="RNase_T"/>
    <property type="match status" value="1"/>
</dbReference>
<dbReference type="SMART" id="SM00479">
    <property type="entry name" value="EXOIII"/>
    <property type="match status" value="1"/>
</dbReference>
<dbReference type="SUPFAM" id="SSF53098">
    <property type="entry name" value="Ribonuclease H-like"/>
    <property type="match status" value="1"/>
</dbReference>
<name>RNT_PSEP7</name>
<feature type="chain" id="PRO_1000011403" description="Ribonuclease T">
    <location>
        <begin position="1"/>
        <end position="224"/>
    </location>
</feature>
<feature type="domain" description="Exonuclease" evidence="1">
    <location>
        <begin position="32"/>
        <end position="206"/>
    </location>
</feature>
<feature type="active site" description="Proton donor/acceptor" evidence="1">
    <location>
        <position position="193"/>
    </location>
</feature>
<feature type="binding site" evidence="1">
    <location>
        <position position="35"/>
    </location>
    <ligand>
        <name>Mg(2+)</name>
        <dbReference type="ChEBI" id="CHEBI:18420"/>
        <label>1</label>
        <note>catalytic</note>
    </ligand>
</feature>
<feature type="binding site" evidence="1">
    <location>
        <position position="35"/>
    </location>
    <ligand>
        <name>Mg(2+)</name>
        <dbReference type="ChEBI" id="CHEBI:18420"/>
        <label>2</label>
        <note>catalytic</note>
    </ligand>
</feature>
<feature type="binding site" evidence="1">
    <location>
        <position position="37"/>
    </location>
    <ligand>
        <name>Mg(2+)</name>
        <dbReference type="ChEBI" id="CHEBI:18420"/>
        <label>2</label>
        <note>catalytic</note>
    </ligand>
</feature>
<feature type="binding site" evidence="1">
    <location>
        <position position="193"/>
    </location>
    <ligand>
        <name>Mg(2+)</name>
        <dbReference type="ChEBI" id="CHEBI:18420"/>
        <label>2</label>
        <note>catalytic</note>
    </ligand>
</feature>
<feature type="binding site" evidence="1">
    <location>
        <position position="198"/>
    </location>
    <ligand>
        <name>Mg(2+)</name>
        <dbReference type="ChEBI" id="CHEBI:18420"/>
        <label>2</label>
        <note>catalytic</note>
    </ligand>
</feature>
<feature type="site" description="Important for substrate binding and specificity" evidence="1">
    <location>
        <position position="41"/>
    </location>
</feature>
<feature type="site" description="Important for substrate binding and specificity" evidence="1">
    <location>
        <position position="89"/>
    </location>
</feature>
<feature type="site" description="Important for substrate binding and specificity" evidence="1">
    <location>
        <position position="136"/>
    </location>
</feature>
<feature type="site" description="Important for substrate binding and specificity" evidence="1">
    <location>
        <position position="158"/>
    </location>
</feature>
<comment type="function">
    <text evidence="1">Trims short 3' overhangs of a variety of RNA species, leaving a one or two nucleotide 3' overhang. Responsible for the end-turnover of tRNA: specifically removes the terminal AMP residue from uncharged tRNA (tRNA-C-C-A). Also appears to be involved in tRNA biosynthesis.</text>
</comment>
<comment type="cofactor">
    <cofactor evidence="1">
        <name>Mg(2+)</name>
        <dbReference type="ChEBI" id="CHEBI:18420"/>
    </cofactor>
    <text evidence="1">Binds two Mg(2+) per subunit. The active form of the enzyme binds two Mg(2+) ions in its active site. The first Mg(2+) forms only one salt bridge with the protein.</text>
</comment>
<comment type="subunit">
    <text evidence="1">Homodimer.</text>
</comment>
<comment type="similarity">
    <text evidence="1">Belongs to the RNase T family.</text>
</comment>
<reference key="1">
    <citation type="submission" date="2007-06" db="EMBL/GenBank/DDBJ databases">
        <authorList>
            <person name="Dodson R.J."/>
            <person name="Harkins D."/>
            <person name="Paulsen I.T."/>
        </authorList>
    </citation>
    <scope>NUCLEOTIDE SEQUENCE [LARGE SCALE GENOMIC DNA]</scope>
    <source>
        <strain>DSM 24068 / PA7</strain>
    </source>
</reference>
<accession>A6V1R8</accession>
<sequence length="224" mass="24808">MSEDNFDEEFDGTLPSGPRHPMARRFRGYLPVVVDVETGGFNSATDALLEIAATTVGMDEKGFLFPEHTYFFRIEPFEGANIEPAALEFTGIKLDHPLRMAVQEEQALTEIFRGIRKALKANGCKRAILVGHNSSFDLGFLNAAVARTGIKRNPFHPFSSFDTATLAGLAYGQTVLAKACQAAGMEFDNREAHSARYDTEKTAELFCGIVNRWKEMGGWMDDDD</sequence>